<sequence length="144" mass="15971">MNFKYIVAVSFLIASAYARSEENDEQSLSQRDILEEESLREIRGIGAKILGGVKTALKGALKELASTYVNGKRTAEDHEVMKRLEAVMRDLDSLDYPEEAAERETRGFNQEEIANLFTKKEKRILGPVIGTIGNVLGGLLKNLG</sequence>
<evidence type="ECO:0000250" key="1"/>
<evidence type="ECO:0000255" key="2"/>
<evidence type="ECO:0000269" key="3">
    <source>
    </source>
</evidence>
<evidence type="ECO:0000305" key="4"/>
<feature type="signal peptide" evidence="2">
    <location>
        <begin position="1"/>
        <end position="18"/>
    </location>
</feature>
<feature type="propeptide" id="PRO_0000003204" evidence="1">
    <location>
        <begin position="19"/>
        <end position="43"/>
    </location>
</feature>
<feature type="peptide" id="PRO_0000003205" description="Maximin-7">
    <location>
        <begin position="44"/>
        <end position="70"/>
    </location>
</feature>
<feature type="propeptide" id="PRO_0000003206" evidence="1">
    <location>
        <begin position="74"/>
        <end position="123"/>
    </location>
</feature>
<feature type="peptide" id="PRO_0000003207" description="Maximin-H6">
    <location>
        <begin position="124"/>
        <end position="143"/>
    </location>
</feature>
<feature type="modified residue" description="Asparagine amide" evidence="3">
    <location>
        <position position="70"/>
    </location>
</feature>
<feature type="modified residue" description="Leucine amide" evidence="3">
    <location>
        <position position="143"/>
    </location>
</feature>
<reference key="1">
    <citation type="journal article" date="2005" name="Eur. J. Immunol.">
        <title>Variety of antimicrobial peptides in the Bombina maxima toad and evidence of their rapid diversification.</title>
        <authorList>
            <person name="Lee W.-H."/>
            <person name="Li Y."/>
            <person name="Lai R."/>
            <person name="Li S."/>
            <person name="Zhang Y."/>
            <person name="Wang W."/>
        </authorList>
    </citation>
    <scope>NUCLEOTIDE SEQUENCE [MRNA]</scope>
    <scope>PROTEIN SEQUENCE OF 44-70 AND 124-143</scope>
    <scope>AMIDATION AT ASN-70 AND LEU-143</scope>
    <source>
        <tissue>Skin</tissue>
    </source>
</reference>
<name>M7H6_BOMMX</name>
<comment type="function">
    <text evidence="1">Maximin-7 shows antimicrobial activity against bacteria and against the fungus C.albicans. It has little hemolytic activity (By similarity).</text>
</comment>
<comment type="function">
    <text evidence="1">Maximin-H6 shows antimicrobial activity against bacteria and against the fungus C.albicans. Shows strong hemolytic activity (By similarity).</text>
</comment>
<comment type="subcellular location">
    <subcellularLocation>
        <location>Secreted</location>
    </subcellularLocation>
</comment>
<comment type="tissue specificity">
    <text>Expressed by the skin glands.</text>
</comment>
<comment type="similarity">
    <text evidence="4">Belongs to the bombinin family.</text>
</comment>
<dbReference type="EMBL" id="AY848987">
    <property type="protein sequence ID" value="AAX50208.1"/>
    <property type="molecule type" value="mRNA"/>
</dbReference>
<dbReference type="EMBL" id="AY848988">
    <property type="protein sequence ID" value="AAX50209.1"/>
    <property type="molecule type" value="mRNA"/>
</dbReference>
<dbReference type="EMBL" id="AY849003">
    <property type="protein sequence ID" value="AAX50224.1"/>
    <property type="molecule type" value="mRNA"/>
</dbReference>
<dbReference type="SMR" id="Q58T72"/>
<dbReference type="GO" id="GO:0005576">
    <property type="term" value="C:extracellular region"/>
    <property type="evidence" value="ECO:0007669"/>
    <property type="project" value="UniProtKB-SubCell"/>
</dbReference>
<dbReference type="GO" id="GO:0042742">
    <property type="term" value="P:defense response to bacterium"/>
    <property type="evidence" value="ECO:0007669"/>
    <property type="project" value="UniProtKB-KW"/>
</dbReference>
<dbReference type="GO" id="GO:0050832">
    <property type="term" value="P:defense response to fungus"/>
    <property type="evidence" value="ECO:0007669"/>
    <property type="project" value="UniProtKB-KW"/>
</dbReference>
<dbReference type="GO" id="GO:0031640">
    <property type="term" value="P:killing of cells of another organism"/>
    <property type="evidence" value="ECO:0007669"/>
    <property type="project" value="UniProtKB-KW"/>
</dbReference>
<dbReference type="InterPro" id="IPR007962">
    <property type="entry name" value="Bombinin"/>
</dbReference>
<dbReference type="Pfam" id="PF05298">
    <property type="entry name" value="Bombinin"/>
    <property type="match status" value="1"/>
</dbReference>
<proteinExistence type="evidence at protein level"/>
<protein>
    <recommendedName>
        <fullName>Maximins 7/H6</fullName>
    </recommendedName>
    <component>
        <recommendedName>
            <fullName>Maximin-7</fullName>
        </recommendedName>
    </component>
    <component>
        <recommendedName>
            <fullName>Maximin-H6</fullName>
        </recommendedName>
    </component>
</protein>
<organism>
    <name type="scientific">Bombina maxima</name>
    <name type="common">Giant fire-bellied toad</name>
    <name type="synonym">Chinese red belly toad</name>
    <dbReference type="NCBI Taxonomy" id="161274"/>
    <lineage>
        <taxon>Eukaryota</taxon>
        <taxon>Metazoa</taxon>
        <taxon>Chordata</taxon>
        <taxon>Craniata</taxon>
        <taxon>Vertebrata</taxon>
        <taxon>Euteleostomi</taxon>
        <taxon>Amphibia</taxon>
        <taxon>Batrachia</taxon>
        <taxon>Anura</taxon>
        <taxon>Bombinatoridae</taxon>
        <taxon>Bombina</taxon>
    </lineage>
</organism>
<accession>Q58T72</accession>
<keyword id="KW-0027">Amidation</keyword>
<keyword id="KW-0878">Amphibian defense peptide</keyword>
<keyword id="KW-0044">Antibiotic</keyword>
<keyword id="KW-0929">Antimicrobial</keyword>
<keyword id="KW-0165">Cleavage on pair of basic residues</keyword>
<keyword id="KW-0204">Cytolysis</keyword>
<keyword id="KW-0903">Direct protein sequencing</keyword>
<keyword id="KW-0295">Fungicide</keyword>
<keyword id="KW-0354">Hemolysis</keyword>
<keyword id="KW-0964">Secreted</keyword>
<keyword id="KW-0732">Signal</keyword>